<evidence type="ECO:0000255" key="1">
    <source>
        <dbReference type="HAMAP-Rule" id="MF_00001"/>
    </source>
</evidence>
<keyword id="KW-0665">Pyrimidine biosynthesis</keyword>
<keyword id="KW-0808">Transferase</keyword>
<reference key="1">
    <citation type="submission" date="2006-08" db="EMBL/GenBank/DDBJ databases">
        <title>Complete sequence of chromosome 1 of Burkholderia cepacia AMMD.</title>
        <authorList>
            <person name="Copeland A."/>
            <person name="Lucas S."/>
            <person name="Lapidus A."/>
            <person name="Barry K."/>
            <person name="Detter J.C."/>
            <person name="Glavina del Rio T."/>
            <person name="Hammon N."/>
            <person name="Israni S."/>
            <person name="Pitluck S."/>
            <person name="Bruce D."/>
            <person name="Chain P."/>
            <person name="Malfatti S."/>
            <person name="Shin M."/>
            <person name="Vergez L."/>
            <person name="Schmutz J."/>
            <person name="Larimer F."/>
            <person name="Land M."/>
            <person name="Hauser L."/>
            <person name="Kyrpides N."/>
            <person name="Kim E."/>
            <person name="Parke J."/>
            <person name="Coenye T."/>
            <person name="Konstantinidis K."/>
            <person name="Ramette A."/>
            <person name="Tiedje J."/>
            <person name="Richardson P."/>
        </authorList>
    </citation>
    <scope>NUCLEOTIDE SEQUENCE [LARGE SCALE GENOMIC DNA]</scope>
    <source>
        <strain>ATCC BAA-244 / DSM 16087 / CCUG 44356 / LMG 19182 / AMMD</strain>
    </source>
</reference>
<dbReference type="EC" id="2.1.3.2" evidence="1"/>
<dbReference type="EMBL" id="CP000440">
    <property type="protein sequence ID" value="ABI86299.1"/>
    <property type="molecule type" value="Genomic_DNA"/>
</dbReference>
<dbReference type="RefSeq" id="WP_006751103.1">
    <property type="nucleotide sequence ID" value="NZ_CP009798.1"/>
</dbReference>
<dbReference type="SMR" id="Q0BHS4"/>
<dbReference type="KEGG" id="bam:Bamb_0740"/>
<dbReference type="PATRIC" id="fig|339670.21.peg.854"/>
<dbReference type="eggNOG" id="COG0540">
    <property type="taxonomic scope" value="Bacteria"/>
</dbReference>
<dbReference type="UniPathway" id="UPA00070">
    <property type="reaction ID" value="UER00116"/>
</dbReference>
<dbReference type="Proteomes" id="UP000000662">
    <property type="component" value="Chromosome 1"/>
</dbReference>
<dbReference type="GO" id="GO:0005829">
    <property type="term" value="C:cytosol"/>
    <property type="evidence" value="ECO:0007669"/>
    <property type="project" value="TreeGrafter"/>
</dbReference>
<dbReference type="GO" id="GO:0016597">
    <property type="term" value="F:amino acid binding"/>
    <property type="evidence" value="ECO:0007669"/>
    <property type="project" value="InterPro"/>
</dbReference>
<dbReference type="GO" id="GO:0004070">
    <property type="term" value="F:aspartate carbamoyltransferase activity"/>
    <property type="evidence" value="ECO:0007669"/>
    <property type="project" value="UniProtKB-UniRule"/>
</dbReference>
<dbReference type="GO" id="GO:0006207">
    <property type="term" value="P:'de novo' pyrimidine nucleobase biosynthetic process"/>
    <property type="evidence" value="ECO:0007669"/>
    <property type="project" value="InterPro"/>
</dbReference>
<dbReference type="GO" id="GO:0044205">
    <property type="term" value="P:'de novo' UMP biosynthetic process"/>
    <property type="evidence" value="ECO:0007669"/>
    <property type="project" value="UniProtKB-UniRule"/>
</dbReference>
<dbReference type="GO" id="GO:0006520">
    <property type="term" value="P:amino acid metabolic process"/>
    <property type="evidence" value="ECO:0007669"/>
    <property type="project" value="InterPro"/>
</dbReference>
<dbReference type="FunFam" id="3.40.50.1370:FF:000007">
    <property type="entry name" value="Aspartate carbamoyltransferase"/>
    <property type="match status" value="1"/>
</dbReference>
<dbReference type="Gene3D" id="3.40.50.1370">
    <property type="entry name" value="Aspartate/ornithine carbamoyltransferase"/>
    <property type="match status" value="2"/>
</dbReference>
<dbReference type="HAMAP" id="MF_00001">
    <property type="entry name" value="Asp_carb_tr"/>
    <property type="match status" value="1"/>
</dbReference>
<dbReference type="InterPro" id="IPR006132">
    <property type="entry name" value="Asp/Orn_carbamoyltranf_P-bd"/>
</dbReference>
<dbReference type="InterPro" id="IPR006130">
    <property type="entry name" value="Asp/Orn_carbamoylTrfase"/>
</dbReference>
<dbReference type="InterPro" id="IPR036901">
    <property type="entry name" value="Asp/Orn_carbamoylTrfase_sf"/>
</dbReference>
<dbReference type="InterPro" id="IPR002082">
    <property type="entry name" value="Asp_carbamoyltransf"/>
</dbReference>
<dbReference type="InterPro" id="IPR006131">
    <property type="entry name" value="Asp_carbamoyltransf_Asp/Orn-bd"/>
</dbReference>
<dbReference type="NCBIfam" id="TIGR00670">
    <property type="entry name" value="asp_carb_tr"/>
    <property type="match status" value="1"/>
</dbReference>
<dbReference type="NCBIfam" id="NF002032">
    <property type="entry name" value="PRK00856.1"/>
    <property type="match status" value="1"/>
</dbReference>
<dbReference type="PANTHER" id="PTHR45753:SF6">
    <property type="entry name" value="ASPARTATE CARBAMOYLTRANSFERASE"/>
    <property type="match status" value="1"/>
</dbReference>
<dbReference type="PANTHER" id="PTHR45753">
    <property type="entry name" value="ORNITHINE CARBAMOYLTRANSFERASE, MITOCHONDRIAL"/>
    <property type="match status" value="1"/>
</dbReference>
<dbReference type="Pfam" id="PF00185">
    <property type="entry name" value="OTCace"/>
    <property type="match status" value="1"/>
</dbReference>
<dbReference type="Pfam" id="PF02729">
    <property type="entry name" value="OTCace_N"/>
    <property type="match status" value="1"/>
</dbReference>
<dbReference type="PRINTS" id="PR00100">
    <property type="entry name" value="AOTCASE"/>
</dbReference>
<dbReference type="PRINTS" id="PR00101">
    <property type="entry name" value="ATCASE"/>
</dbReference>
<dbReference type="SUPFAM" id="SSF53671">
    <property type="entry name" value="Aspartate/ornithine carbamoyltransferase"/>
    <property type="match status" value="1"/>
</dbReference>
<dbReference type="PROSITE" id="PS00097">
    <property type="entry name" value="CARBAMOYLTRANSFERASE"/>
    <property type="match status" value="1"/>
</dbReference>
<sequence length="343" mass="37277">MTTDTTGRTGNPAAAASPERFRYGFLKGNPQLTKNGELKHLLSIEGLPRSIVNHILDTAEQFVSVTDREVKKVPLLRGKSVFNLFFENSTRTRTTFEIAATRLSADVLNLNINASSTSKGESLLDTINNLSAMHADLFVVRHASSGAPYLIAEHCAPHVHVINAGDGRHAHPTQGLLDMYTIRHYKRDFTKLRVAIVGDILHSRVARSDIHALTTLGVPEVRAIGPRTLLPGGLEQMGVKVFNNLDEGLKGVDVIIMLRLQNERMSGALLPSAQEYFKTWGLTPERLALAAPDAIVMHPGPMNRGVEIDSQVADGPQSVILNQVTFGIAVRMAVMGIVAGNSD</sequence>
<comment type="function">
    <text evidence="1">Catalyzes the condensation of carbamoyl phosphate and aspartate to form carbamoyl aspartate and inorganic phosphate, the committed step in the de novo pyrimidine nucleotide biosynthesis pathway.</text>
</comment>
<comment type="catalytic activity">
    <reaction evidence="1">
        <text>carbamoyl phosphate + L-aspartate = N-carbamoyl-L-aspartate + phosphate + H(+)</text>
        <dbReference type="Rhea" id="RHEA:20013"/>
        <dbReference type="ChEBI" id="CHEBI:15378"/>
        <dbReference type="ChEBI" id="CHEBI:29991"/>
        <dbReference type="ChEBI" id="CHEBI:32814"/>
        <dbReference type="ChEBI" id="CHEBI:43474"/>
        <dbReference type="ChEBI" id="CHEBI:58228"/>
        <dbReference type="EC" id="2.1.3.2"/>
    </reaction>
</comment>
<comment type="pathway">
    <text evidence="1">Pyrimidine metabolism; UMP biosynthesis via de novo pathway; (S)-dihydroorotate from bicarbonate: step 2/3.</text>
</comment>
<comment type="subunit">
    <text evidence="1">Heterododecamer (2C3:3R2) of six catalytic PyrB chains organized as two trimers (C3), and six regulatory PyrI chains organized as three dimers (R2).</text>
</comment>
<comment type="similarity">
    <text evidence="1">Belongs to the aspartate/ornithine carbamoyltransferase superfamily. ATCase family.</text>
</comment>
<protein>
    <recommendedName>
        <fullName evidence="1">Aspartate carbamoyltransferase catalytic subunit</fullName>
        <ecNumber evidence="1">2.1.3.2</ecNumber>
    </recommendedName>
    <alternativeName>
        <fullName evidence="1">Aspartate transcarbamylase</fullName>
        <shortName evidence="1">ATCase</shortName>
    </alternativeName>
</protein>
<name>PYRB_BURCM</name>
<organism>
    <name type="scientific">Burkholderia ambifaria (strain ATCC BAA-244 / DSM 16087 / CCUG 44356 / LMG 19182 / AMMD)</name>
    <name type="common">Burkholderia cepacia (strain AMMD)</name>
    <dbReference type="NCBI Taxonomy" id="339670"/>
    <lineage>
        <taxon>Bacteria</taxon>
        <taxon>Pseudomonadati</taxon>
        <taxon>Pseudomonadota</taxon>
        <taxon>Betaproteobacteria</taxon>
        <taxon>Burkholderiales</taxon>
        <taxon>Burkholderiaceae</taxon>
        <taxon>Burkholderia</taxon>
        <taxon>Burkholderia cepacia complex</taxon>
    </lineage>
</organism>
<proteinExistence type="inferred from homology"/>
<accession>Q0BHS4</accession>
<gene>
    <name evidence="1" type="primary">pyrB</name>
    <name type="ordered locus">Bamb_0740</name>
</gene>
<feature type="chain" id="PRO_0000321078" description="Aspartate carbamoyltransferase catalytic subunit">
    <location>
        <begin position="1"/>
        <end position="343"/>
    </location>
</feature>
<feature type="binding site" evidence="1">
    <location>
        <position position="91"/>
    </location>
    <ligand>
        <name>carbamoyl phosphate</name>
        <dbReference type="ChEBI" id="CHEBI:58228"/>
    </ligand>
</feature>
<feature type="binding site" evidence="1">
    <location>
        <position position="92"/>
    </location>
    <ligand>
        <name>carbamoyl phosphate</name>
        <dbReference type="ChEBI" id="CHEBI:58228"/>
    </ligand>
</feature>
<feature type="binding site" evidence="1">
    <location>
        <position position="119"/>
    </location>
    <ligand>
        <name>L-aspartate</name>
        <dbReference type="ChEBI" id="CHEBI:29991"/>
    </ligand>
</feature>
<feature type="binding site" evidence="1">
    <location>
        <position position="141"/>
    </location>
    <ligand>
        <name>carbamoyl phosphate</name>
        <dbReference type="ChEBI" id="CHEBI:58228"/>
    </ligand>
</feature>
<feature type="binding site" evidence="1">
    <location>
        <position position="171"/>
    </location>
    <ligand>
        <name>carbamoyl phosphate</name>
        <dbReference type="ChEBI" id="CHEBI:58228"/>
    </ligand>
</feature>
<feature type="binding site" evidence="1">
    <location>
        <position position="174"/>
    </location>
    <ligand>
        <name>carbamoyl phosphate</name>
        <dbReference type="ChEBI" id="CHEBI:58228"/>
    </ligand>
</feature>
<feature type="binding site" evidence="1">
    <location>
        <position position="204"/>
    </location>
    <ligand>
        <name>L-aspartate</name>
        <dbReference type="ChEBI" id="CHEBI:29991"/>
    </ligand>
</feature>
<feature type="binding site" evidence="1">
    <location>
        <position position="259"/>
    </location>
    <ligand>
        <name>L-aspartate</name>
        <dbReference type="ChEBI" id="CHEBI:29991"/>
    </ligand>
</feature>
<feature type="binding site" evidence="1">
    <location>
        <position position="300"/>
    </location>
    <ligand>
        <name>carbamoyl phosphate</name>
        <dbReference type="ChEBI" id="CHEBI:58228"/>
    </ligand>
</feature>
<feature type="binding site" evidence="1">
    <location>
        <position position="301"/>
    </location>
    <ligand>
        <name>carbamoyl phosphate</name>
        <dbReference type="ChEBI" id="CHEBI:58228"/>
    </ligand>
</feature>